<reference key="1">
    <citation type="journal article" date="1995" name="Plant Mol. Biol.">
        <title>Calmodulin gene family in potato: developmental and touch-induced expression of the mRNA encoding a novel isoform.</title>
        <authorList>
            <person name="Takezawa D."/>
            <person name="Liu Z.H."/>
            <person name="An G."/>
            <person name="Poovaiah B.W."/>
        </authorList>
    </citation>
    <scope>NUCLEOTIDE SEQUENCE [GENOMIC DNA / MRNA]</scope>
    <scope>INDUCTION</scope>
    <scope>TISSUE SPECIFICITY</scope>
    <scope>DEVELOPMENTAL STAGE</scope>
    <source>
        <strain>cv. Russet Burbank-0</strain>
    </source>
</reference>
<reference key="2">
    <citation type="journal article" date="2011" name="Nature">
        <title>Genome sequence and analysis of the tuber crop potato.</title>
        <authorList>
            <consortium name="The Potato Genome Sequencing Consortium"/>
        </authorList>
    </citation>
    <scope>NUCLEOTIDE SEQUENCE [LARGE SCALE GENOMIC DNA]</scope>
    <source>
        <strain>cv. DM1-3 516 R44</strain>
    </source>
</reference>
<proteinExistence type="evidence at protein level"/>
<comment type="function">
    <text>Calmodulin mediates the control of a large number of enzymes, ion channels and other proteins by Ca(2+). Among the enzymes to be stimulated by the calmodulin-Ca(2+) complex are a number of protein kinases and phosphatases.</text>
</comment>
<comment type="tissue specificity">
    <text evidence="3">High expression of PCM5 and 8 in stolon tips and stems, moderate in roots, and low in leaves. Steady-state expression of PCM6 in all the tissues tested, except in the leaves where the expression is lower.</text>
</comment>
<comment type="developmental stage">
    <text evidence="3">Expression of PCM5 and 8 reduced during tuber development.</text>
</comment>
<comment type="induction">
    <text evidence="3">PCM5, PCM6 and PCM8 are not induced by touching.</text>
</comment>
<comment type="miscellaneous">
    <text>The expression of PCM7 was not investigated.</text>
</comment>
<comment type="miscellaneous">
    <text>This protein has four functional calcium-binding sites.</text>
</comment>
<comment type="similarity">
    <text evidence="4">Belongs to the calmodulin family.</text>
</comment>
<evidence type="ECO:0000250" key="1"/>
<evidence type="ECO:0000255" key="2">
    <source>
        <dbReference type="PROSITE-ProRule" id="PRU00448"/>
    </source>
</evidence>
<evidence type="ECO:0000269" key="3">
    <source>
    </source>
</evidence>
<evidence type="ECO:0000305" key="4"/>
<evidence type="ECO:0007829" key="5">
    <source>
        <dbReference type="PDB" id="1RFJ"/>
    </source>
</evidence>
<dbReference type="EMBL" id="U20294">
    <property type="protein sequence ID" value="AAA85155.1"/>
    <property type="molecule type" value="Genomic_DNA"/>
</dbReference>
<dbReference type="EMBL" id="U20295">
    <property type="protein sequence ID" value="AAA62351.1"/>
    <property type="molecule type" value="mRNA"/>
</dbReference>
<dbReference type="EMBL" id="U20296">
    <property type="protein sequence ID" value="AAA85156.1"/>
    <property type="molecule type" value="Genomic_DNA"/>
</dbReference>
<dbReference type="EMBL" id="U20297">
    <property type="protein sequence ID" value="AAA85157.1"/>
    <property type="molecule type" value="Genomic_DNA"/>
</dbReference>
<dbReference type="RefSeq" id="NP_001275359.1">
    <property type="nucleotide sequence ID" value="NM_001288430.1"/>
</dbReference>
<dbReference type="PDB" id="1RFJ">
    <property type="method" value="X-ray"/>
    <property type="resolution" value="2.00 A"/>
    <property type="chains" value="A=1-149"/>
</dbReference>
<dbReference type="PDBsum" id="1RFJ"/>
<dbReference type="SMR" id="Q7DMN9"/>
<dbReference type="DIP" id="DIP-59736N"/>
<dbReference type="IntAct" id="Q7DMN9">
    <property type="interactions" value="1"/>
</dbReference>
<dbReference type="STRING" id="4113.Q7DMN9"/>
<dbReference type="PaxDb" id="4113-PGSC0003DMT400058435"/>
<dbReference type="EnsemblPlants" id="PGSC0003DMT400058435">
    <property type="protein sequence ID" value="PGSC0003DMT400058435"/>
    <property type="gene ID" value="PGSC0003DMG400022693"/>
</dbReference>
<dbReference type="EnsemblPlants" id="RHC01H1G0653.2.1">
    <property type="protein sequence ID" value="RHC01H1G0653.2.1"/>
    <property type="gene ID" value="RHC01H1G0653.2"/>
</dbReference>
<dbReference type="GeneID" id="102577873"/>
<dbReference type="Gramene" id="PGSC0003DMT400058435">
    <property type="protein sequence ID" value="PGSC0003DMT400058435"/>
    <property type="gene ID" value="PGSC0003DMG400022693"/>
</dbReference>
<dbReference type="Gramene" id="RHC01H1G0653.2.1">
    <property type="protein sequence ID" value="RHC01H1G0653.2.1"/>
    <property type="gene ID" value="RHC01H1G0653.2"/>
</dbReference>
<dbReference type="KEGG" id="sot:102577873"/>
<dbReference type="eggNOG" id="KOG0027">
    <property type="taxonomic scope" value="Eukaryota"/>
</dbReference>
<dbReference type="HOGENOM" id="CLU_061288_2_0_1"/>
<dbReference type="InParanoid" id="Q7DMN9"/>
<dbReference type="OMA" id="ARKMKEC"/>
<dbReference type="OrthoDB" id="1851401at2759"/>
<dbReference type="EvolutionaryTrace" id="Q7DMN9"/>
<dbReference type="Proteomes" id="UP000011115">
    <property type="component" value="Unassembled WGS sequence"/>
</dbReference>
<dbReference type="ExpressionAtlas" id="Q7DMN9">
    <property type="expression patterns" value="baseline"/>
</dbReference>
<dbReference type="GO" id="GO:0005737">
    <property type="term" value="C:cytoplasm"/>
    <property type="evidence" value="ECO:0000318"/>
    <property type="project" value="GO_Central"/>
</dbReference>
<dbReference type="GO" id="GO:0005509">
    <property type="term" value="F:calcium ion binding"/>
    <property type="evidence" value="ECO:0000318"/>
    <property type="project" value="GO_Central"/>
</dbReference>
<dbReference type="GO" id="GO:0030234">
    <property type="term" value="F:enzyme regulator activity"/>
    <property type="evidence" value="ECO:0000318"/>
    <property type="project" value="GO_Central"/>
</dbReference>
<dbReference type="CDD" id="cd00051">
    <property type="entry name" value="EFh"/>
    <property type="match status" value="2"/>
</dbReference>
<dbReference type="FunFam" id="1.10.238.10:FF:000034">
    <property type="entry name" value="Calmodulin"/>
    <property type="match status" value="1"/>
</dbReference>
<dbReference type="FunFam" id="1.10.238.10:FF:000042">
    <property type="entry name" value="Calmodulin"/>
    <property type="match status" value="1"/>
</dbReference>
<dbReference type="Gene3D" id="1.10.238.10">
    <property type="entry name" value="EF-hand"/>
    <property type="match status" value="3"/>
</dbReference>
<dbReference type="InterPro" id="IPR050230">
    <property type="entry name" value="CALM/Myosin/TropC-like"/>
</dbReference>
<dbReference type="InterPro" id="IPR011992">
    <property type="entry name" value="EF-hand-dom_pair"/>
</dbReference>
<dbReference type="InterPro" id="IPR018247">
    <property type="entry name" value="EF_Hand_1_Ca_BS"/>
</dbReference>
<dbReference type="InterPro" id="IPR002048">
    <property type="entry name" value="EF_hand_dom"/>
</dbReference>
<dbReference type="PANTHER" id="PTHR23048:SF53">
    <property type="entry name" value="CALMODULIN"/>
    <property type="match status" value="1"/>
</dbReference>
<dbReference type="PANTHER" id="PTHR23048">
    <property type="entry name" value="MYOSIN LIGHT CHAIN 1, 3"/>
    <property type="match status" value="1"/>
</dbReference>
<dbReference type="Pfam" id="PF13499">
    <property type="entry name" value="EF-hand_7"/>
    <property type="match status" value="2"/>
</dbReference>
<dbReference type="SMART" id="SM00054">
    <property type="entry name" value="EFh"/>
    <property type="match status" value="4"/>
</dbReference>
<dbReference type="SUPFAM" id="SSF47473">
    <property type="entry name" value="EF-hand"/>
    <property type="match status" value="1"/>
</dbReference>
<dbReference type="PROSITE" id="PS00018">
    <property type="entry name" value="EF_HAND_1"/>
    <property type="match status" value="4"/>
</dbReference>
<dbReference type="PROSITE" id="PS50222">
    <property type="entry name" value="EF_HAND_2"/>
    <property type="match status" value="4"/>
</dbReference>
<name>CALM5_SOLTU</name>
<sequence>MADQLTEDQISEFKEAFSLFDKDGDGCITTKELGTVMRSLGQNPTEAELQDMINEVDADGNGTIDFPEFLNLMARKMKDTDSEEELKEAFRVFDKDQNGFISAAELRHVMTNLGEKLTDEEVDEMIREADVDGDGQINYDEFVKVMMAK</sequence>
<keyword id="KW-0002">3D-structure</keyword>
<keyword id="KW-0007">Acetylation</keyword>
<keyword id="KW-0106">Calcium</keyword>
<keyword id="KW-0479">Metal-binding</keyword>
<keyword id="KW-0488">Methylation</keyword>
<keyword id="KW-1185">Reference proteome</keyword>
<keyword id="KW-0677">Repeat</keyword>
<accession>Q7DMN9</accession>
<protein>
    <recommendedName>
        <fullName>Calmodulin-5/6/7/8</fullName>
        <shortName>CaM-5/6/7/8</shortName>
    </recommendedName>
</protein>
<organism>
    <name type="scientific">Solanum tuberosum</name>
    <name type="common">Potato</name>
    <dbReference type="NCBI Taxonomy" id="4113"/>
    <lineage>
        <taxon>Eukaryota</taxon>
        <taxon>Viridiplantae</taxon>
        <taxon>Streptophyta</taxon>
        <taxon>Embryophyta</taxon>
        <taxon>Tracheophyta</taxon>
        <taxon>Spermatophyta</taxon>
        <taxon>Magnoliopsida</taxon>
        <taxon>eudicotyledons</taxon>
        <taxon>Gunneridae</taxon>
        <taxon>Pentapetalae</taxon>
        <taxon>asterids</taxon>
        <taxon>lamiids</taxon>
        <taxon>Solanales</taxon>
        <taxon>Solanaceae</taxon>
        <taxon>Solanoideae</taxon>
        <taxon>Solaneae</taxon>
        <taxon>Solanum</taxon>
    </lineage>
</organism>
<feature type="initiator methionine" description="Removed" evidence="1">
    <location>
        <position position="1"/>
    </location>
</feature>
<feature type="chain" id="PRO_0000198305" description="Calmodulin-5/6/7/8">
    <location>
        <begin position="2"/>
        <end position="149"/>
    </location>
</feature>
<feature type="domain" description="EF-hand 1" evidence="2">
    <location>
        <begin position="8"/>
        <end position="43"/>
    </location>
</feature>
<feature type="domain" description="EF-hand 2" evidence="2">
    <location>
        <begin position="44"/>
        <end position="79"/>
    </location>
</feature>
<feature type="domain" description="EF-hand 3" evidence="2">
    <location>
        <begin position="81"/>
        <end position="116"/>
    </location>
</feature>
<feature type="domain" description="EF-hand 4" evidence="2">
    <location>
        <begin position="117"/>
        <end position="149"/>
    </location>
</feature>
<feature type="binding site" evidence="2">
    <location>
        <position position="21"/>
    </location>
    <ligand>
        <name>Ca(2+)</name>
        <dbReference type="ChEBI" id="CHEBI:29108"/>
        <label>1</label>
    </ligand>
</feature>
<feature type="binding site" evidence="2">
    <location>
        <position position="23"/>
    </location>
    <ligand>
        <name>Ca(2+)</name>
        <dbReference type="ChEBI" id="CHEBI:29108"/>
        <label>1</label>
    </ligand>
</feature>
<feature type="binding site" evidence="2">
    <location>
        <position position="25"/>
    </location>
    <ligand>
        <name>Ca(2+)</name>
        <dbReference type="ChEBI" id="CHEBI:29108"/>
        <label>1</label>
    </ligand>
</feature>
<feature type="binding site" evidence="2">
    <location>
        <position position="27"/>
    </location>
    <ligand>
        <name>Ca(2+)</name>
        <dbReference type="ChEBI" id="CHEBI:29108"/>
        <label>1</label>
    </ligand>
</feature>
<feature type="binding site" evidence="2">
    <location>
        <position position="32"/>
    </location>
    <ligand>
        <name>Ca(2+)</name>
        <dbReference type="ChEBI" id="CHEBI:29108"/>
        <label>1</label>
    </ligand>
</feature>
<feature type="binding site" evidence="2">
    <location>
        <position position="57"/>
    </location>
    <ligand>
        <name>Ca(2+)</name>
        <dbReference type="ChEBI" id="CHEBI:29108"/>
        <label>2</label>
    </ligand>
</feature>
<feature type="binding site" evidence="2">
    <location>
        <position position="59"/>
    </location>
    <ligand>
        <name>Ca(2+)</name>
        <dbReference type="ChEBI" id="CHEBI:29108"/>
        <label>2</label>
    </ligand>
</feature>
<feature type="binding site" evidence="2">
    <location>
        <position position="61"/>
    </location>
    <ligand>
        <name>Ca(2+)</name>
        <dbReference type="ChEBI" id="CHEBI:29108"/>
        <label>2</label>
    </ligand>
</feature>
<feature type="binding site" evidence="2">
    <location>
        <position position="63"/>
    </location>
    <ligand>
        <name>Ca(2+)</name>
        <dbReference type="ChEBI" id="CHEBI:29108"/>
        <label>2</label>
    </ligand>
</feature>
<feature type="binding site" evidence="2">
    <location>
        <position position="68"/>
    </location>
    <ligand>
        <name>Ca(2+)</name>
        <dbReference type="ChEBI" id="CHEBI:29108"/>
        <label>2</label>
    </ligand>
</feature>
<feature type="binding site" evidence="2">
    <location>
        <position position="94"/>
    </location>
    <ligand>
        <name>Ca(2+)</name>
        <dbReference type="ChEBI" id="CHEBI:29108"/>
        <label>3</label>
    </ligand>
</feature>
<feature type="binding site" evidence="2">
    <location>
        <position position="96"/>
    </location>
    <ligand>
        <name>Ca(2+)</name>
        <dbReference type="ChEBI" id="CHEBI:29108"/>
        <label>3</label>
    </ligand>
</feature>
<feature type="binding site" evidence="2">
    <location>
        <position position="98"/>
    </location>
    <ligand>
        <name>Ca(2+)</name>
        <dbReference type="ChEBI" id="CHEBI:29108"/>
        <label>3</label>
    </ligand>
</feature>
<feature type="binding site" evidence="2">
    <location>
        <position position="105"/>
    </location>
    <ligand>
        <name>Ca(2+)</name>
        <dbReference type="ChEBI" id="CHEBI:29108"/>
        <label>3</label>
    </ligand>
</feature>
<feature type="binding site" evidence="2">
    <location>
        <position position="130"/>
    </location>
    <ligand>
        <name>Ca(2+)</name>
        <dbReference type="ChEBI" id="CHEBI:29108"/>
        <label>4</label>
    </ligand>
</feature>
<feature type="binding site" evidence="2">
    <location>
        <position position="132"/>
    </location>
    <ligand>
        <name>Ca(2+)</name>
        <dbReference type="ChEBI" id="CHEBI:29108"/>
        <label>4</label>
    </ligand>
</feature>
<feature type="binding site" evidence="2">
    <location>
        <position position="134"/>
    </location>
    <ligand>
        <name>Ca(2+)</name>
        <dbReference type="ChEBI" id="CHEBI:29108"/>
        <label>4</label>
    </ligand>
</feature>
<feature type="binding site" evidence="2">
    <location>
        <position position="136"/>
    </location>
    <ligand>
        <name>Ca(2+)</name>
        <dbReference type="ChEBI" id="CHEBI:29108"/>
        <label>4</label>
    </ligand>
</feature>
<feature type="binding site" evidence="2">
    <location>
        <position position="141"/>
    </location>
    <ligand>
        <name>Ca(2+)</name>
        <dbReference type="ChEBI" id="CHEBI:29108"/>
        <label>4</label>
    </ligand>
</feature>
<feature type="modified residue" description="N-acetylalanine" evidence="1">
    <location>
        <position position="2"/>
    </location>
</feature>
<feature type="modified residue" description="N6,N6,N6-trimethyllysine" evidence="1">
    <location>
        <position position="116"/>
    </location>
</feature>
<feature type="helix" evidence="5">
    <location>
        <begin position="7"/>
        <end position="20"/>
    </location>
</feature>
<feature type="strand" evidence="5">
    <location>
        <begin position="25"/>
        <end position="28"/>
    </location>
</feature>
<feature type="helix" evidence="5">
    <location>
        <begin position="30"/>
        <end position="39"/>
    </location>
</feature>
<feature type="helix" evidence="5">
    <location>
        <begin position="46"/>
        <end position="56"/>
    </location>
</feature>
<feature type="strand" evidence="5">
    <location>
        <begin position="61"/>
        <end position="64"/>
    </location>
</feature>
<feature type="helix" evidence="5">
    <location>
        <begin position="66"/>
        <end position="93"/>
    </location>
</feature>
<feature type="strand" evidence="5">
    <location>
        <begin position="98"/>
        <end position="101"/>
    </location>
</feature>
<feature type="helix" evidence="5">
    <location>
        <begin position="103"/>
        <end position="111"/>
    </location>
</feature>
<feature type="turn" evidence="5">
    <location>
        <begin position="112"/>
        <end position="114"/>
    </location>
</feature>
<feature type="helix" evidence="5">
    <location>
        <begin position="119"/>
        <end position="129"/>
    </location>
</feature>
<feature type="strand" evidence="5">
    <location>
        <begin position="134"/>
        <end position="138"/>
    </location>
</feature>
<feature type="helix" evidence="5">
    <location>
        <begin position="139"/>
        <end position="146"/>
    </location>
</feature>
<gene>
    <name type="primary">PCM5</name>
</gene>
<gene>
    <name type="primary">PCM6</name>
</gene>
<gene>
    <name type="primary">PCM7</name>
</gene>
<gene>
    <name type="primary">PCM8</name>
</gene>